<proteinExistence type="evidence at protein level"/>
<gene>
    <name type="primary">sod1</name>
    <name type="synonym">sod</name>
    <name type="ordered locus">VNG_1190G</name>
</gene>
<evidence type="ECO:0000250" key="1"/>
<evidence type="ECO:0000269" key="2">
    <source>
    </source>
</evidence>
<evidence type="ECO:0000269" key="3">
    <source>
    </source>
</evidence>
<evidence type="ECO:0000305" key="4"/>
<sequence>MSEYELPPLPYDYDALEPHISEQVLTWHHDTHHQGYVNGWNDAEETLAENRETGDHASTAGALGDVTHNGSGHILHTLFWQSMSPAGGDEPSGALADRIAADFGSYENWRAEFEAAASAASGWALLVYDSHSNTLRNVAVDNHDEGALWGSHPILALDVWEHSYYYDYGPDRGSFVDAFFEVVDWDEPTERFEQAAERFE</sequence>
<feature type="initiator methionine" description="Removed" evidence="2">
    <location>
        <position position="1"/>
    </location>
</feature>
<feature type="chain" id="PRO_0000160114" description="Superoxide dismutase [Mn] 1">
    <location>
        <begin position="2"/>
        <end position="200"/>
    </location>
</feature>
<feature type="binding site" evidence="1">
    <location>
        <position position="29"/>
    </location>
    <ligand>
        <name>Mn(2+)</name>
        <dbReference type="ChEBI" id="CHEBI:29035"/>
    </ligand>
</feature>
<feature type="binding site" evidence="1">
    <location>
        <position position="76"/>
    </location>
    <ligand>
        <name>Mn(2+)</name>
        <dbReference type="ChEBI" id="CHEBI:29035"/>
    </ligand>
</feature>
<feature type="binding site" evidence="1">
    <location>
        <position position="158"/>
    </location>
    <ligand>
        <name>Mn(2+)</name>
        <dbReference type="ChEBI" id="CHEBI:29035"/>
    </ligand>
</feature>
<feature type="binding site" evidence="1">
    <location>
        <position position="162"/>
    </location>
    <ligand>
        <name>Mn(2+)</name>
        <dbReference type="ChEBI" id="CHEBI:29035"/>
    </ligand>
</feature>
<feature type="sequence conflict" description="In Ref. 5; AA sequence." evidence="4" ref="5">
    <original>S</original>
    <variation>T</variation>
    <location>
        <position position="2"/>
    </location>
</feature>
<feature type="sequence conflict" description="In Ref. 5; AA sequence." evidence="4" ref="5">
    <original>E</original>
    <variation>N</variation>
    <location>
        <position position="52"/>
    </location>
</feature>
<feature type="sequence conflict" description="In Ref. 3; AAA73373." evidence="4" ref="3">
    <original>A</original>
    <variation>V</variation>
    <location>
        <position position="100"/>
    </location>
</feature>
<comment type="function">
    <text evidence="2 3">Destroys superoxide anion radicals which are normally produced within the cells and which are toxic to biological systems.</text>
</comment>
<comment type="catalytic activity">
    <reaction evidence="2 3">
        <text>2 superoxide + 2 H(+) = H2O2 + O2</text>
        <dbReference type="Rhea" id="RHEA:20696"/>
        <dbReference type="ChEBI" id="CHEBI:15378"/>
        <dbReference type="ChEBI" id="CHEBI:15379"/>
        <dbReference type="ChEBI" id="CHEBI:16240"/>
        <dbReference type="ChEBI" id="CHEBI:18421"/>
        <dbReference type="EC" id="1.15.1.1"/>
    </reaction>
</comment>
<comment type="cofactor">
    <cofactor evidence="2 3">
        <name>Mn(2+)</name>
        <dbReference type="ChEBI" id="CHEBI:29035"/>
    </cofactor>
    <text evidence="2 3">Binds 1 Mn(2+) ion per subunit.</text>
</comment>
<comment type="activity regulation">
    <text evidence="2">Inhibited by hydrogen peroxide. Is resistant to cyanide and azide inhibition.</text>
</comment>
<comment type="subunit">
    <text evidence="2 3">Homodimer or homotetramer.</text>
</comment>
<comment type="similarity">
    <text evidence="4">Belongs to the iron/manganese superoxide dismutase family.</text>
</comment>
<dbReference type="EC" id="1.15.1.1"/>
<dbReference type="EMBL" id="J04956">
    <property type="protein sequence ID" value="AAA72217.1"/>
    <property type="molecule type" value="Genomic_DNA"/>
</dbReference>
<dbReference type="EMBL" id="M97484">
    <property type="protein sequence ID" value="AAA73373.1"/>
    <property type="molecule type" value="Genomic_DNA"/>
</dbReference>
<dbReference type="EMBL" id="AE004437">
    <property type="protein sequence ID" value="AAG19564.1"/>
    <property type="molecule type" value="Genomic_DNA"/>
</dbReference>
<dbReference type="PIR" id="A34319">
    <property type="entry name" value="A34319"/>
</dbReference>
<dbReference type="PIR" id="H84274">
    <property type="entry name" value="H84274"/>
</dbReference>
<dbReference type="PIR" id="T50043">
    <property type="entry name" value="T50043"/>
</dbReference>
<dbReference type="RefSeq" id="WP_010902860.1">
    <property type="nucleotide sequence ID" value="NC_002607.1"/>
</dbReference>
<dbReference type="SMR" id="P09737"/>
<dbReference type="STRING" id="64091.VNG_1190G"/>
<dbReference type="PaxDb" id="64091-VNG_1190G"/>
<dbReference type="GeneID" id="89349542"/>
<dbReference type="KEGG" id="hal:VNG_1190G"/>
<dbReference type="PATRIC" id="fig|64091.14.peg.912"/>
<dbReference type="HOGENOM" id="CLU_031625_2_1_2"/>
<dbReference type="InParanoid" id="P09737"/>
<dbReference type="OrthoDB" id="32917at2157"/>
<dbReference type="PhylomeDB" id="P09737"/>
<dbReference type="Proteomes" id="UP000000554">
    <property type="component" value="Chromosome"/>
</dbReference>
<dbReference type="GO" id="GO:0005737">
    <property type="term" value="C:cytoplasm"/>
    <property type="evidence" value="ECO:0000318"/>
    <property type="project" value="GO_Central"/>
</dbReference>
<dbReference type="GO" id="GO:0046872">
    <property type="term" value="F:metal ion binding"/>
    <property type="evidence" value="ECO:0007669"/>
    <property type="project" value="UniProtKB-KW"/>
</dbReference>
<dbReference type="GO" id="GO:0004784">
    <property type="term" value="F:superoxide dismutase activity"/>
    <property type="evidence" value="ECO:0007669"/>
    <property type="project" value="UniProtKB-EC"/>
</dbReference>
<dbReference type="FunFam" id="3.55.40.20:FF:000004">
    <property type="entry name" value="Superoxide dismutase [Fe]"/>
    <property type="match status" value="1"/>
</dbReference>
<dbReference type="Gene3D" id="1.10.287.990">
    <property type="entry name" value="Fe,Mn superoxide dismutase (SOD) domain"/>
    <property type="match status" value="1"/>
</dbReference>
<dbReference type="Gene3D" id="3.55.40.20">
    <property type="entry name" value="Iron/manganese superoxide dismutase, C-terminal domain"/>
    <property type="match status" value="1"/>
</dbReference>
<dbReference type="InterPro" id="IPR050265">
    <property type="entry name" value="Fe/Mn_Superoxide_Dismutase"/>
</dbReference>
<dbReference type="InterPro" id="IPR001189">
    <property type="entry name" value="Mn/Fe_SOD"/>
</dbReference>
<dbReference type="InterPro" id="IPR019833">
    <property type="entry name" value="Mn/Fe_SOD_BS"/>
</dbReference>
<dbReference type="InterPro" id="IPR019832">
    <property type="entry name" value="Mn/Fe_SOD_C"/>
</dbReference>
<dbReference type="InterPro" id="IPR019831">
    <property type="entry name" value="Mn/Fe_SOD_N"/>
</dbReference>
<dbReference type="InterPro" id="IPR036324">
    <property type="entry name" value="Mn/Fe_SOD_N_sf"/>
</dbReference>
<dbReference type="InterPro" id="IPR036314">
    <property type="entry name" value="SOD_C_sf"/>
</dbReference>
<dbReference type="InterPro" id="IPR054865">
    <property type="entry name" value="Superox_dis_Halo"/>
</dbReference>
<dbReference type="NCBIfam" id="NF041312">
    <property type="entry name" value="Superox_dis_Halo"/>
    <property type="match status" value="1"/>
</dbReference>
<dbReference type="PANTHER" id="PTHR11404">
    <property type="entry name" value="SUPEROXIDE DISMUTASE 2"/>
    <property type="match status" value="1"/>
</dbReference>
<dbReference type="PANTHER" id="PTHR11404:SF6">
    <property type="entry name" value="SUPEROXIDE DISMUTASE [MN], MITOCHONDRIAL"/>
    <property type="match status" value="1"/>
</dbReference>
<dbReference type="Pfam" id="PF02777">
    <property type="entry name" value="Sod_Fe_C"/>
    <property type="match status" value="1"/>
</dbReference>
<dbReference type="Pfam" id="PF00081">
    <property type="entry name" value="Sod_Fe_N"/>
    <property type="match status" value="1"/>
</dbReference>
<dbReference type="PIRSF" id="PIRSF000349">
    <property type="entry name" value="SODismutase"/>
    <property type="match status" value="1"/>
</dbReference>
<dbReference type="PRINTS" id="PR01703">
    <property type="entry name" value="MNSODISMTASE"/>
</dbReference>
<dbReference type="SUPFAM" id="SSF54719">
    <property type="entry name" value="Fe,Mn superoxide dismutase (SOD), C-terminal domain"/>
    <property type="match status" value="1"/>
</dbReference>
<dbReference type="SUPFAM" id="SSF46609">
    <property type="entry name" value="Fe,Mn superoxide dismutase (SOD), N-terminal domain"/>
    <property type="match status" value="1"/>
</dbReference>
<dbReference type="PROSITE" id="PS00088">
    <property type="entry name" value="SOD_MN"/>
    <property type="match status" value="1"/>
</dbReference>
<name>SODM1_HALSA</name>
<organism>
    <name type="scientific">Halobacterium salinarum (strain ATCC 700922 / JCM 11081 / NRC-1)</name>
    <name type="common">Halobacterium halobium</name>
    <dbReference type="NCBI Taxonomy" id="64091"/>
    <lineage>
        <taxon>Archaea</taxon>
        <taxon>Methanobacteriati</taxon>
        <taxon>Methanobacteriota</taxon>
        <taxon>Stenosarchaea group</taxon>
        <taxon>Halobacteria</taxon>
        <taxon>Halobacteriales</taxon>
        <taxon>Halobacteriaceae</taxon>
        <taxon>Halobacterium</taxon>
        <taxon>Halobacterium salinarum NRC-34001</taxon>
    </lineage>
</organism>
<keyword id="KW-0903">Direct protein sequencing</keyword>
<keyword id="KW-0464">Manganese</keyword>
<keyword id="KW-0479">Metal-binding</keyword>
<keyword id="KW-0560">Oxidoreductase</keyword>
<keyword id="KW-1185">Reference proteome</keyword>
<protein>
    <recommendedName>
        <fullName>Superoxide dismutase [Mn] 1</fullName>
        <ecNumber>1.15.1.1</ecNumber>
    </recommendedName>
</protein>
<accession>P09737</accession>
<accession>Q03303</accession>
<accession>Q9HQF1</accession>
<reference key="1">
    <citation type="journal article" date="1989" name="Can. J. Microbiol.">
        <title>The expression of the superoxide dismutase gene in Halobacterium cutirubrum and Halobacterium volcanii.</title>
        <authorList>
            <person name="May B.P."/>
            <person name="Tam P."/>
            <person name="Dennis P.P."/>
        </authorList>
    </citation>
    <scope>NUCLEOTIDE SEQUENCE [GENOMIC DNA]</scope>
</reference>
<reference key="2">
    <citation type="journal article" date="1989" name="J. Biol. Chem.">
        <title>Evolution and regulation of the gene encoding superoxide dismutase from the archaebacterium Halobacterium cutirubrum.</title>
        <authorList>
            <person name="May B.P."/>
            <person name="Dennis P.P."/>
        </authorList>
    </citation>
    <scope>NUCLEOTIDE SEQUENCE [GENOMIC DNA]</scope>
</reference>
<reference key="3">
    <citation type="journal article" date="1993" name="J. Bacteriol.">
        <title>Characterization of paralogous and orthologous members of the superoxide dismutase gene family from genera of the halophilic archaebacteria.</title>
        <authorList>
            <person name="Joshi P.B."/>
            <person name="Dennis P.P."/>
        </authorList>
    </citation>
    <scope>NUCLEOTIDE SEQUENCE [GENOMIC DNA]</scope>
    <source>
        <strain>GRB</strain>
    </source>
</reference>
<reference key="4">
    <citation type="journal article" date="2000" name="Proc. Natl. Acad. Sci. U.S.A.">
        <title>Genome sequence of Halobacterium species NRC-1.</title>
        <authorList>
            <person name="Ng W.V."/>
            <person name="Kennedy S.P."/>
            <person name="Mahairas G.G."/>
            <person name="Berquist B."/>
            <person name="Pan M."/>
            <person name="Shukla H.D."/>
            <person name="Lasky S.R."/>
            <person name="Baliga N.S."/>
            <person name="Thorsson V."/>
            <person name="Sbrogna J."/>
            <person name="Swartzell S."/>
            <person name="Weir D."/>
            <person name="Hall J."/>
            <person name="Dahl T.A."/>
            <person name="Welti R."/>
            <person name="Goo Y.A."/>
            <person name="Leithauser B."/>
            <person name="Keller K."/>
            <person name="Cruz R."/>
            <person name="Danson M.J."/>
            <person name="Hough D.W."/>
            <person name="Maddocks D.G."/>
            <person name="Jablonski P.E."/>
            <person name="Krebs M.P."/>
            <person name="Angevine C.M."/>
            <person name="Dale H."/>
            <person name="Isenbarger T.A."/>
            <person name="Peck R.F."/>
            <person name="Pohlschroder M."/>
            <person name="Spudich J.L."/>
            <person name="Jung K.-H."/>
            <person name="Alam M."/>
            <person name="Freitas T."/>
            <person name="Hou S."/>
            <person name="Daniels C.J."/>
            <person name="Dennis P.P."/>
            <person name="Omer A.D."/>
            <person name="Ebhardt H."/>
            <person name="Lowe T.M."/>
            <person name="Liang P."/>
            <person name="Riley M."/>
            <person name="Hood L."/>
            <person name="DasSarma S."/>
        </authorList>
    </citation>
    <scope>NUCLEOTIDE SEQUENCE [LARGE SCALE GENOMIC DNA]</scope>
    <source>
        <strain>ATCC 700922 / JCM 11081 / NRC-1</strain>
    </source>
</reference>
<reference key="5">
    <citation type="journal article" date="1987" name="J. Bacteriol.">
        <title>Superoxide dismutase from the extremely halophilic archaebacterium Halobacterium cutirubrum.</title>
        <authorList>
            <person name="May B.P."/>
            <person name="Dennis P.P."/>
        </authorList>
    </citation>
    <scope>PROTEIN SEQUENCE OF 2-57</scope>
    <scope>FUNCTION</scope>
    <scope>CATALYTIC ACTIVITY</scope>
    <scope>COFACTOR</scope>
    <scope>ACTIVITY REGULATION</scope>
    <scope>SUBUNIT</scope>
</reference>
<reference key="6">
    <citation type="journal article" date="1988" name="Arch. Biochem. Biophys.">
        <title>Purification of a manganese-containing superoxide dismutase from Halobacterium halobium.</title>
        <authorList>
            <person name="Salin M.L."/>
            <person name="Oesterhelt D."/>
        </authorList>
    </citation>
    <scope>PROTEIN SEQUENCE OF N-TERMINUS</scope>
    <scope>FUNCTION</scope>
    <scope>CATALYTIC ACTIVITY</scope>
    <scope>COFACTOR</scope>
    <scope>SUBUNIT</scope>
    <source>
        <strain>NRL</strain>
    </source>
</reference>